<dbReference type="EMBL" id="CP000777">
    <property type="protein sequence ID" value="ABZ92551.1"/>
    <property type="molecule type" value="Genomic_DNA"/>
</dbReference>
<dbReference type="RefSeq" id="WP_012387039.1">
    <property type="nucleotide sequence ID" value="NC_010842.1"/>
</dbReference>
<dbReference type="SMR" id="B0S907"/>
<dbReference type="KEGG" id="lbf:LBF_0004"/>
<dbReference type="HOGENOM" id="CLU_026910_3_2_12"/>
<dbReference type="GO" id="GO:0005737">
    <property type="term" value="C:cytoplasm"/>
    <property type="evidence" value="ECO:0007669"/>
    <property type="project" value="UniProtKB-SubCell"/>
</dbReference>
<dbReference type="GO" id="GO:0005886">
    <property type="term" value="C:plasma membrane"/>
    <property type="evidence" value="ECO:0007669"/>
    <property type="project" value="TreeGrafter"/>
</dbReference>
<dbReference type="GO" id="GO:0005524">
    <property type="term" value="F:ATP binding"/>
    <property type="evidence" value="ECO:0007669"/>
    <property type="project" value="UniProtKB-UniRule"/>
</dbReference>
<dbReference type="GO" id="GO:0016887">
    <property type="term" value="F:ATP hydrolysis activity"/>
    <property type="evidence" value="ECO:0007669"/>
    <property type="project" value="InterPro"/>
</dbReference>
<dbReference type="GO" id="GO:0003688">
    <property type="term" value="F:DNA replication origin binding"/>
    <property type="evidence" value="ECO:0007669"/>
    <property type="project" value="UniProtKB-UniRule"/>
</dbReference>
<dbReference type="GO" id="GO:0008289">
    <property type="term" value="F:lipid binding"/>
    <property type="evidence" value="ECO:0007669"/>
    <property type="project" value="UniProtKB-KW"/>
</dbReference>
<dbReference type="GO" id="GO:0006270">
    <property type="term" value="P:DNA replication initiation"/>
    <property type="evidence" value="ECO:0007669"/>
    <property type="project" value="UniProtKB-UniRule"/>
</dbReference>
<dbReference type="GO" id="GO:0006275">
    <property type="term" value="P:regulation of DNA replication"/>
    <property type="evidence" value="ECO:0007669"/>
    <property type="project" value="UniProtKB-UniRule"/>
</dbReference>
<dbReference type="CDD" id="cd00009">
    <property type="entry name" value="AAA"/>
    <property type="match status" value="1"/>
</dbReference>
<dbReference type="CDD" id="cd06571">
    <property type="entry name" value="Bac_DnaA_C"/>
    <property type="match status" value="1"/>
</dbReference>
<dbReference type="FunFam" id="3.40.50.300:FF:000668">
    <property type="entry name" value="Chromosomal replication initiator protein DnaA"/>
    <property type="match status" value="1"/>
</dbReference>
<dbReference type="Gene3D" id="1.10.1750.10">
    <property type="match status" value="1"/>
</dbReference>
<dbReference type="Gene3D" id="1.10.8.60">
    <property type="match status" value="1"/>
</dbReference>
<dbReference type="Gene3D" id="3.30.300.180">
    <property type="match status" value="1"/>
</dbReference>
<dbReference type="Gene3D" id="3.40.50.300">
    <property type="entry name" value="P-loop containing nucleotide triphosphate hydrolases"/>
    <property type="match status" value="1"/>
</dbReference>
<dbReference type="HAMAP" id="MF_00377">
    <property type="entry name" value="DnaA_bact"/>
    <property type="match status" value="1"/>
</dbReference>
<dbReference type="InterPro" id="IPR003593">
    <property type="entry name" value="AAA+_ATPase"/>
</dbReference>
<dbReference type="InterPro" id="IPR001957">
    <property type="entry name" value="Chromosome_initiator_DnaA"/>
</dbReference>
<dbReference type="InterPro" id="IPR020591">
    <property type="entry name" value="Chromosome_initiator_DnaA-like"/>
</dbReference>
<dbReference type="InterPro" id="IPR013159">
    <property type="entry name" value="DnaA_C"/>
</dbReference>
<dbReference type="InterPro" id="IPR013317">
    <property type="entry name" value="DnaA_dom"/>
</dbReference>
<dbReference type="InterPro" id="IPR024633">
    <property type="entry name" value="DnaA_N_dom"/>
</dbReference>
<dbReference type="InterPro" id="IPR038454">
    <property type="entry name" value="DnaA_N_sf"/>
</dbReference>
<dbReference type="InterPro" id="IPR027417">
    <property type="entry name" value="P-loop_NTPase"/>
</dbReference>
<dbReference type="InterPro" id="IPR010921">
    <property type="entry name" value="Trp_repressor/repl_initiator"/>
</dbReference>
<dbReference type="NCBIfam" id="TIGR00362">
    <property type="entry name" value="DnaA"/>
    <property type="match status" value="1"/>
</dbReference>
<dbReference type="PANTHER" id="PTHR30050">
    <property type="entry name" value="CHROMOSOMAL REPLICATION INITIATOR PROTEIN DNAA"/>
    <property type="match status" value="1"/>
</dbReference>
<dbReference type="PANTHER" id="PTHR30050:SF2">
    <property type="entry name" value="CHROMOSOMAL REPLICATION INITIATOR PROTEIN DNAA"/>
    <property type="match status" value="1"/>
</dbReference>
<dbReference type="Pfam" id="PF00308">
    <property type="entry name" value="Bac_DnaA"/>
    <property type="match status" value="1"/>
</dbReference>
<dbReference type="Pfam" id="PF08299">
    <property type="entry name" value="Bac_DnaA_C"/>
    <property type="match status" value="1"/>
</dbReference>
<dbReference type="Pfam" id="PF11638">
    <property type="entry name" value="DnaA_N"/>
    <property type="match status" value="1"/>
</dbReference>
<dbReference type="PRINTS" id="PR00051">
    <property type="entry name" value="DNAA"/>
</dbReference>
<dbReference type="SMART" id="SM00382">
    <property type="entry name" value="AAA"/>
    <property type="match status" value="1"/>
</dbReference>
<dbReference type="SMART" id="SM00760">
    <property type="entry name" value="Bac_DnaA_C"/>
    <property type="match status" value="1"/>
</dbReference>
<dbReference type="SUPFAM" id="SSF52540">
    <property type="entry name" value="P-loop containing nucleoside triphosphate hydrolases"/>
    <property type="match status" value="1"/>
</dbReference>
<dbReference type="SUPFAM" id="SSF48295">
    <property type="entry name" value="TrpR-like"/>
    <property type="match status" value="1"/>
</dbReference>
<name>DNAA_LEPBA</name>
<organism>
    <name type="scientific">Leptospira biflexa serovar Patoc (strain Patoc 1 / Ames)</name>
    <dbReference type="NCBI Taxonomy" id="355278"/>
    <lineage>
        <taxon>Bacteria</taxon>
        <taxon>Pseudomonadati</taxon>
        <taxon>Spirochaetota</taxon>
        <taxon>Spirochaetia</taxon>
        <taxon>Leptospirales</taxon>
        <taxon>Leptospiraceae</taxon>
        <taxon>Leptospira</taxon>
    </lineage>
</organism>
<sequence length="441" mass="51326">MDIRWEEILEEISKQIPPKYFSNFIAPLRFDKWENQVVHLMAPSGGIKRHVETKYIGFIEDAVYQVVGDRFKVSILTESETSSHVLKEVIQSKFDDSDSDLNPEYIFSNYITSDSNRIAFTAAKSVVEQPGKYNPLYLFGPVGVGKTHLLHSIGNEIKKKDPWKTVRYVNSTSFLNEFIFTVRQNNRESLESFKIRYQSYNVLLFDDIQFLNGGAEKTQEEFFALFNFLYDRKRQIVIASDRPSYELPLHDRLKSRFVHGLQADIKSHDLELRKSLLKSNFSEFNIPASDNLLHWLAERLEGDSRALIGIVNDLVMYKKAYEYFLLTEDKIKEIAEARFLTNKKRIGFSPDMVIDLVCERTNVARKDLLGKSRKADFIPPRHLCMLLLHDVLNVPKAQIGRIFSTTHSTVIHGIDKFKERMKSEAQWEDLFHTIKHKISFQ</sequence>
<proteinExistence type="inferred from homology"/>
<reference key="1">
    <citation type="journal article" date="2008" name="PLoS ONE">
        <title>Genome sequence of the saprophyte Leptospira biflexa provides insights into the evolution of Leptospira and the pathogenesis of leptospirosis.</title>
        <authorList>
            <person name="Picardeau M."/>
            <person name="Bulach D.M."/>
            <person name="Bouchier C."/>
            <person name="Zuerner R.L."/>
            <person name="Zidane N."/>
            <person name="Wilson P.J."/>
            <person name="Creno S."/>
            <person name="Kuczek E.S."/>
            <person name="Bommezzadri S."/>
            <person name="Davis J.C."/>
            <person name="McGrath A."/>
            <person name="Johnson M.J."/>
            <person name="Boursaux-Eude C."/>
            <person name="Seemann T."/>
            <person name="Rouy Z."/>
            <person name="Coppel R.L."/>
            <person name="Rood J.I."/>
            <person name="Lajus A."/>
            <person name="Davies J.K."/>
            <person name="Medigue C."/>
            <person name="Adler B."/>
        </authorList>
    </citation>
    <scope>NUCLEOTIDE SEQUENCE [LARGE SCALE GENOMIC DNA]</scope>
    <source>
        <strain>Patoc 1 / Ames</strain>
    </source>
</reference>
<protein>
    <recommendedName>
        <fullName evidence="1">Chromosomal replication initiator protein DnaA</fullName>
    </recommendedName>
</protein>
<keyword id="KW-0067">ATP-binding</keyword>
<keyword id="KW-0963">Cytoplasm</keyword>
<keyword id="KW-0235">DNA replication</keyword>
<keyword id="KW-0238">DNA-binding</keyword>
<keyword id="KW-0446">Lipid-binding</keyword>
<keyword id="KW-0547">Nucleotide-binding</keyword>
<feature type="chain" id="PRO_1000121994" description="Chromosomal replication initiator protein DnaA">
    <location>
        <begin position="1"/>
        <end position="441"/>
    </location>
</feature>
<feature type="region of interest" description="Domain I, interacts with DnaA modulators" evidence="1">
    <location>
        <begin position="1"/>
        <end position="71"/>
    </location>
</feature>
<feature type="region of interest" description="Domain II" evidence="1">
    <location>
        <begin position="71"/>
        <end position="99"/>
    </location>
</feature>
<feature type="region of interest" description="Domain III, AAA+ region" evidence="1">
    <location>
        <begin position="100"/>
        <end position="318"/>
    </location>
</feature>
<feature type="region of interest" description="Domain IV, binds dsDNA" evidence="1">
    <location>
        <begin position="319"/>
        <end position="441"/>
    </location>
</feature>
<feature type="binding site" evidence="1">
    <location>
        <position position="143"/>
    </location>
    <ligand>
        <name>ATP</name>
        <dbReference type="ChEBI" id="CHEBI:30616"/>
    </ligand>
</feature>
<feature type="binding site" evidence="1">
    <location>
        <position position="145"/>
    </location>
    <ligand>
        <name>ATP</name>
        <dbReference type="ChEBI" id="CHEBI:30616"/>
    </ligand>
</feature>
<feature type="binding site" evidence="1">
    <location>
        <position position="146"/>
    </location>
    <ligand>
        <name>ATP</name>
        <dbReference type="ChEBI" id="CHEBI:30616"/>
    </ligand>
</feature>
<feature type="binding site" evidence="1">
    <location>
        <position position="147"/>
    </location>
    <ligand>
        <name>ATP</name>
        <dbReference type="ChEBI" id="CHEBI:30616"/>
    </ligand>
</feature>
<gene>
    <name evidence="1" type="primary">dnaA</name>
    <name type="ordered locus">LBF_0004</name>
</gene>
<comment type="function">
    <text evidence="1">Plays an essential role in the initiation and regulation of chromosomal replication. ATP-DnaA binds to the origin of replication (oriC) to initiate formation of the DNA replication initiation complex once per cell cycle. Binds the DnaA box (a 9 base pair repeat at the origin) and separates the double-stranded (ds)DNA. Forms a right-handed helical filament on oriC DNA; dsDNA binds to the exterior of the filament while single-stranded (ss)DNA is stabiized in the filament's interior. The ATP-DnaA-oriC complex binds and stabilizes one strand of the AT-rich DNA unwinding element (DUE), permitting loading of DNA polymerase. After initiation quickly degrades to an ADP-DnaA complex that is not apt for DNA replication. Binds acidic phospholipids.</text>
</comment>
<comment type="subunit">
    <text evidence="1">Oligomerizes as a right-handed, spiral filament on DNA at oriC.</text>
</comment>
<comment type="subcellular location">
    <subcellularLocation>
        <location evidence="1">Cytoplasm</location>
    </subcellularLocation>
</comment>
<comment type="domain">
    <text evidence="1">Domain I is involved in oligomerization and binding regulators, domain II is flexibile and of varying length in different bacteria, domain III forms the AAA+ region, while domain IV binds dsDNA.</text>
</comment>
<comment type="similarity">
    <text evidence="1">Belongs to the DnaA family.</text>
</comment>
<accession>B0S907</accession>
<evidence type="ECO:0000255" key="1">
    <source>
        <dbReference type="HAMAP-Rule" id="MF_00377"/>
    </source>
</evidence>